<reference key="1">
    <citation type="submission" date="2006-03" db="EMBL/GenBank/DDBJ databases">
        <title>Complete sequence of Rhodopseudomonas palustris BisB18.</title>
        <authorList>
            <consortium name="US DOE Joint Genome Institute"/>
            <person name="Copeland A."/>
            <person name="Lucas S."/>
            <person name="Lapidus A."/>
            <person name="Barry K."/>
            <person name="Detter J.C."/>
            <person name="Glavina del Rio T."/>
            <person name="Hammon N."/>
            <person name="Israni S."/>
            <person name="Dalin E."/>
            <person name="Tice H."/>
            <person name="Pitluck S."/>
            <person name="Chain P."/>
            <person name="Malfatti S."/>
            <person name="Shin M."/>
            <person name="Vergez L."/>
            <person name="Schmutz J."/>
            <person name="Larimer F."/>
            <person name="Land M."/>
            <person name="Hauser L."/>
            <person name="Pelletier D.A."/>
            <person name="Kyrpides N."/>
            <person name="Anderson I."/>
            <person name="Oda Y."/>
            <person name="Harwood C.S."/>
            <person name="Richardson P."/>
        </authorList>
    </citation>
    <scope>NUCLEOTIDE SEQUENCE [LARGE SCALE GENOMIC DNA]</scope>
    <source>
        <strain>BisB18</strain>
    </source>
</reference>
<dbReference type="EMBL" id="CP000301">
    <property type="protein sequence ID" value="ABD88991.1"/>
    <property type="molecule type" value="Genomic_DNA"/>
</dbReference>
<dbReference type="SMR" id="Q211E5"/>
<dbReference type="STRING" id="316056.RPC_3451"/>
<dbReference type="KEGG" id="rpc:RPC_3451"/>
<dbReference type="eggNOG" id="COG0480">
    <property type="taxonomic scope" value="Bacteria"/>
</dbReference>
<dbReference type="HOGENOM" id="CLU_002794_4_1_5"/>
<dbReference type="OrthoDB" id="9802948at2"/>
<dbReference type="GO" id="GO:0005737">
    <property type="term" value="C:cytoplasm"/>
    <property type="evidence" value="ECO:0007669"/>
    <property type="project" value="UniProtKB-SubCell"/>
</dbReference>
<dbReference type="GO" id="GO:0005525">
    <property type="term" value="F:GTP binding"/>
    <property type="evidence" value="ECO:0007669"/>
    <property type="project" value="UniProtKB-UniRule"/>
</dbReference>
<dbReference type="GO" id="GO:0003924">
    <property type="term" value="F:GTPase activity"/>
    <property type="evidence" value="ECO:0007669"/>
    <property type="project" value="InterPro"/>
</dbReference>
<dbReference type="GO" id="GO:0097216">
    <property type="term" value="F:guanosine tetraphosphate binding"/>
    <property type="evidence" value="ECO:0007669"/>
    <property type="project" value="UniProtKB-ARBA"/>
</dbReference>
<dbReference type="GO" id="GO:0003746">
    <property type="term" value="F:translation elongation factor activity"/>
    <property type="evidence" value="ECO:0007669"/>
    <property type="project" value="UniProtKB-UniRule"/>
</dbReference>
<dbReference type="GO" id="GO:0032790">
    <property type="term" value="P:ribosome disassembly"/>
    <property type="evidence" value="ECO:0007669"/>
    <property type="project" value="TreeGrafter"/>
</dbReference>
<dbReference type="CDD" id="cd01886">
    <property type="entry name" value="EF-G"/>
    <property type="match status" value="1"/>
</dbReference>
<dbReference type="CDD" id="cd16262">
    <property type="entry name" value="EFG_III"/>
    <property type="match status" value="1"/>
</dbReference>
<dbReference type="CDD" id="cd01434">
    <property type="entry name" value="EFG_mtEFG1_IV"/>
    <property type="match status" value="1"/>
</dbReference>
<dbReference type="CDD" id="cd03713">
    <property type="entry name" value="EFG_mtEFG_C"/>
    <property type="match status" value="1"/>
</dbReference>
<dbReference type="CDD" id="cd04088">
    <property type="entry name" value="EFG_mtEFG_II"/>
    <property type="match status" value="1"/>
</dbReference>
<dbReference type="FunFam" id="2.40.30.10:FF:000006">
    <property type="entry name" value="Elongation factor G"/>
    <property type="match status" value="1"/>
</dbReference>
<dbReference type="FunFam" id="3.30.230.10:FF:000003">
    <property type="entry name" value="Elongation factor G"/>
    <property type="match status" value="1"/>
</dbReference>
<dbReference type="FunFam" id="3.30.70.240:FF:000001">
    <property type="entry name" value="Elongation factor G"/>
    <property type="match status" value="1"/>
</dbReference>
<dbReference type="FunFam" id="3.30.70.870:FF:000001">
    <property type="entry name" value="Elongation factor G"/>
    <property type="match status" value="1"/>
</dbReference>
<dbReference type="FunFam" id="3.40.50.300:FF:000029">
    <property type="entry name" value="Elongation factor G"/>
    <property type="match status" value="1"/>
</dbReference>
<dbReference type="Gene3D" id="3.30.230.10">
    <property type="match status" value="1"/>
</dbReference>
<dbReference type="Gene3D" id="3.30.70.240">
    <property type="match status" value="1"/>
</dbReference>
<dbReference type="Gene3D" id="3.30.70.870">
    <property type="entry name" value="Elongation Factor G (Translational Gtpase), domain 3"/>
    <property type="match status" value="1"/>
</dbReference>
<dbReference type="Gene3D" id="3.40.50.300">
    <property type="entry name" value="P-loop containing nucleotide triphosphate hydrolases"/>
    <property type="match status" value="1"/>
</dbReference>
<dbReference type="Gene3D" id="2.40.30.10">
    <property type="entry name" value="Translation factors"/>
    <property type="match status" value="1"/>
</dbReference>
<dbReference type="HAMAP" id="MF_00054_B">
    <property type="entry name" value="EF_G_EF_2_B"/>
    <property type="match status" value="1"/>
</dbReference>
<dbReference type="InterPro" id="IPR041095">
    <property type="entry name" value="EFG_II"/>
</dbReference>
<dbReference type="InterPro" id="IPR009022">
    <property type="entry name" value="EFG_III"/>
</dbReference>
<dbReference type="InterPro" id="IPR035647">
    <property type="entry name" value="EFG_III/V"/>
</dbReference>
<dbReference type="InterPro" id="IPR047872">
    <property type="entry name" value="EFG_IV"/>
</dbReference>
<dbReference type="InterPro" id="IPR035649">
    <property type="entry name" value="EFG_V"/>
</dbReference>
<dbReference type="InterPro" id="IPR000640">
    <property type="entry name" value="EFG_V-like"/>
</dbReference>
<dbReference type="InterPro" id="IPR004161">
    <property type="entry name" value="EFTu-like_2"/>
</dbReference>
<dbReference type="InterPro" id="IPR031157">
    <property type="entry name" value="G_TR_CS"/>
</dbReference>
<dbReference type="InterPro" id="IPR027417">
    <property type="entry name" value="P-loop_NTPase"/>
</dbReference>
<dbReference type="InterPro" id="IPR020568">
    <property type="entry name" value="Ribosomal_Su5_D2-typ_SF"/>
</dbReference>
<dbReference type="InterPro" id="IPR014721">
    <property type="entry name" value="Ribsml_uS5_D2-typ_fold_subgr"/>
</dbReference>
<dbReference type="InterPro" id="IPR005225">
    <property type="entry name" value="Small_GTP-bd"/>
</dbReference>
<dbReference type="InterPro" id="IPR000795">
    <property type="entry name" value="T_Tr_GTP-bd_dom"/>
</dbReference>
<dbReference type="InterPro" id="IPR009000">
    <property type="entry name" value="Transl_B-barrel_sf"/>
</dbReference>
<dbReference type="InterPro" id="IPR004540">
    <property type="entry name" value="Transl_elong_EFG/EF2"/>
</dbReference>
<dbReference type="InterPro" id="IPR005517">
    <property type="entry name" value="Transl_elong_EFG/EF2_IV"/>
</dbReference>
<dbReference type="NCBIfam" id="TIGR00484">
    <property type="entry name" value="EF-G"/>
    <property type="match status" value="1"/>
</dbReference>
<dbReference type="NCBIfam" id="NF009379">
    <property type="entry name" value="PRK12740.1-3"/>
    <property type="match status" value="1"/>
</dbReference>
<dbReference type="NCBIfam" id="NF009381">
    <property type="entry name" value="PRK12740.1-5"/>
    <property type="match status" value="1"/>
</dbReference>
<dbReference type="NCBIfam" id="TIGR00231">
    <property type="entry name" value="small_GTP"/>
    <property type="match status" value="1"/>
</dbReference>
<dbReference type="PANTHER" id="PTHR43261:SF1">
    <property type="entry name" value="RIBOSOME-RELEASING FACTOR 2, MITOCHONDRIAL"/>
    <property type="match status" value="1"/>
</dbReference>
<dbReference type="PANTHER" id="PTHR43261">
    <property type="entry name" value="TRANSLATION ELONGATION FACTOR G-RELATED"/>
    <property type="match status" value="1"/>
</dbReference>
<dbReference type="Pfam" id="PF00679">
    <property type="entry name" value="EFG_C"/>
    <property type="match status" value="1"/>
</dbReference>
<dbReference type="Pfam" id="PF14492">
    <property type="entry name" value="EFG_III"/>
    <property type="match status" value="1"/>
</dbReference>
<dbReference type="Pfam" id="PF03764">
    <property type="entry name" value="EFG_IV"/>
    <property type="match status" value="1"/>
</dbReference>
<dbReference type="Pfam" id="PF00009">
    <property type="entry name" value="GTP_EFTU"/>
    <property type="match status" value="1"/>
</dbReference>
<dbReference type="Pfam" id="PF03144">
    <property type="entry name" value="GTP_EFTU_D2"/>
    <property type="match status" value="1"/>
</dbReference>
<dbReference type="PRINTS" id="PR00315">
    <property type="entry name" value="ELONGATNFCT"/>
</dbReference>
<dbReference type="SMART" id="SM00838">
    <property type="entry name" value="EFG_C"/>
    <property type="match status" value="1"/>
</dbReference>
<dbReference type="SMART" id="SM00889">
    <property type="entry name" value="EFG_IV"/>
    <property type="match status" value="1"/>
</dbReference>
<dbReference type="SUPFAM" id="SSF54980">
    <property type="entry name" value="EF-G C-terminal domain-like"/>
    <property type="match status" value="2"/>
</dbReference>
<dbReference type="SUPFAM" id="SSF52540">
    <property type="entry name" value="P-loop containing nucleoside triphosphate hydrolases"/>
    <property type="match status" value="1"/>
</dbReference>
<dbReference type="SUPFAM" id="SSF54211">
    <property type="entry name" value="Ribosomal protein S5 domain 2-like"/>
    <property type="match status" value="1"/>
</dbReference>
<dbReference type="SUPFAM" id="SSF50447">
    <property type="entry name" value="Translation proteins"/>
    <property type="match status" value="1"/>
</dbReference>
<dbReference type="PROSITE" id="PS00301">
    <property type="entry name" value="G_TR_1"/>
    <property type="match status" value="1"/>
</dbReference>
<dbReference type="PROSITE" id="PS51722">
    <property type="entry name" value="G_TR_2"/>
    <property type="match status" value="1"/>
</dbReference>
<keyword id="KW-0963">Cytoplasm</keyword>
<keyword id="KW-0251">Elongation factor</keyword>
<keyword id="KW-0342">GTP-binding</keyword>
<keyword id="KW-0547">Nucleotide-binding</keyword>
<keyword id="KW-0648">Protein biosynthesis</keyword>
<gene>
    <name evidence="1" type="primary">fusA</name>
    <name type="ordered locus">RPC_3451</name>
</gene>
<proteinExistence type="inferred from homology"/>
<evidence type="ECO:0000255" key="1">
    <source>
        <dbReference type="HAMAP-Rule" id="MF_00054"/>
    </source>
</evidence>
<accession>Q211E5</accession>
<comment type="function">
    <text evidence="1">Catalyzes the GTP-dependent ribosomal translocation step during translation elongation. During this step, the ribosome changes from the pre-translocational (PRE) to the post-translocational (POST) state as the newly formed A-site-bound peptidyl-tRNA and P-site-bound deacylated tRNA move to the P and E sites, respectively. Catalyzes the coordinated movement of the two tRNA molecules, the mRNA and conformational changes in the ribosome.</text>
</comment>
<comment type="subcellular location">
    <subcellularLocation>
        <location evidence="1">Cytoplasm</location>
    </subcellularLocation>
</comment>
<comment type="similarity">
    <text evidence="1">Belongs to the TRAFAC class translation factor GTPase superfamily. Classic translation factor GTPase family. EF-G/EF-2 subfamily.</text>
</comment>
<feature type="chain" id="PRO_0000263493" description="Elongation factor G">
    <location>
        <begin position="1"/>
        <end position="690"/>
    </location>
</feature>
<feature type="domain" description="tr-type G">
    <location>
        <begin position="8"/>
        <end position="283"/>
    </location>
</feature>
<feature type="binding site" evidence="1">
    <location>
        <begin position="17"/>
        <end position="24"/>
    </location>
    <ligand>
        <name>GTP</name>
        <dbReference type="ChEBI" id="CHEBI:37565"/>
    </ligand>
</feature>
<feature type="binding site" evidence="1">
    <location>
        <begin position="81"/>
        <end position="85"/>
    </location>
    <ligand>
        <name>GTP</name>
        <dbReference type="ChEBI" id="CHEBI:37565"/>
    </ligand>
</feature>
<feature type="binding site" evidence="1">
    <location>
        <begin position="135"/>
        <end position="138"/>
    </location>
    <ligand>
        <name>GTP</name>
        <dbReference type="ChEBI" id="CHEBI:37565"/>
    </ligand>
</feature>
<sequence length="690" mass="75858">MPRVHAIEDYRNFGIMAHIDAGKTTTTERILYYTGKSHKIGEVHEGAATMDWMEQEQERGITITSAATTAFWNGKRLNIIDTPGHVDFTIEVERSLRVLDGAVVVLDGNQGVEPQTETVWRQGDKYRVPRIVFANKMDKTGADFYKCLQDIIDRLGAKPIAIQLPIGEESNFKGLVDLVRMKGVIWEDEALGANFKDIDIPADLVEKAKEYREKLVEAAVELDDEVLTAFLDGVEPDEATLKRLIRKAVLTSAFYPVLCGSAFKNKGVQPLLDAVVDYLPSPVDVPAIKGVDDDGNEIIRLPNDSEPLALLAFKIMDDPFVGTITFCRIYSGTLISGTGVVNSTRDRKERIGRMLLMHANNREDIKEAYAGDIVALAGLKEARTGDTLCDANKPVILEKMEFPEPVIEIAIEPKTKADQEKLGVALAKLAAEDPSFRVSTDLESGQTILKGMGELHLDIKVDILRRTYKVDANIGAPQVAFRERVTKKAEVDYTHKKQTGGTGQFARVKFIVEPNEPGKGFEFESKVVGGAVPKEYIPGVEKGLNSVLSSGVVAGFPVVDVKVTLIDGAYHDVDSSALAFEIASRAAFREALQKGKSVLLEPIMKVECVTPEDYTGSVIGDLNSRRGQIQGQDMRGNANVINAMVPLMNMFGYVNNLRSMSQGRATFTMQFDHYAEAPANVSAEVQKKFA</sequence>
<name>EFG_RHOPB</name>
<organism>
    <name type="scientific">Rhodopseudomonas palustris (strain BisB18)</name>
    <dbReference type="NCBI Taxonomy" id="316056"/>
    <lineage>
        <taxon>Bacteria</taxon>
        <taxon>Pseudomonadati</taxon>
        <taxon>Pseudomonadota</taxon>
        <taxon>Alphaproteobacteria</taxon>
        <taxon>Hyphomicrobiales</taxon>
        <taxon>Nitrobacteraceae</taxon>
        <taxon>Rhodopseudomonas</taxon>
    </lineage>
</organism>
<protein>
    <recommendedName>
        <fullName evidence="1">Elongation factor G</fullName>
        <shortName evidence="1">EF-G</shortName>
    </recommendedName>
</protein>